<accession>Q0SF82</accession>
<keyword id="KW-0460">Magnesium</keyword>
<keyword id="KW-0464">Manganese</keyword>
<keyword id="KW-0474">Menaquinone biosynthesis</keyword>
<keyword id="KW-0479">Metal-binding</keyword>
<keyword id="KW-0786">Thiamine pyrophosphate</keyword>
<keyword id="KW-0808">Transferase</keyword>
<evidence type="ECO:0000255" key="1">
    <source>
        <dbReference type="HAMAP-Rule" id="MF_01659"/>
    </source>
</evidence>
<gene>
    <name evidence="1" type="primary">menD</name>
    <name type="ordered locus">RHA1_ro01997</name>
</gene>
<organism>
    <name type="scientific">Rhodococcus jostii (strain RHA1)</name>
    <dbReference type="NCBI Taxonomy" id="101510"/>
    <lineage>
        <taxon>Bacteria</taxon>
        <taxon>Bacillati</taxon>
        <taxon>Actinomycetota</taxon>
        <taxon>Actinomycetes</taxon>
        <taxon>Mycobacteriales</taxon>
        <taxon>Nocardiaceae</taxon>
        <taxon>Rhodococcus</taxon>
    </lineage>
</organism>
<reference key="1">
    <citation type="journal article" date="2006" name="Proc. Natl. Acad. Sci. U.S.A.">
        <title>The complete genome of Rhodococcus sp. RHA1 provides insights into a catabolic powerhouse.</title>
        <authorList>
            <person name="McLeod M.P."/>
            <person name="Warren R.L."/>
            <person name="Hsiao W.W.L."/>
            <person name="Araki N."/>
            <person name="Myhre M."/>
            <person name="Fernandes C."/>
            <person name="Miyazawa D."/>
            <person name="Wong W."/>
            <person name="Lillquist A.L."/>
            <person name="Wang D."/>
            <person name="Dosanjh M."/>
            <person name="Hara H."/>
            <person name="Petrescu A."/>
            <person name="Morin R.D."/>
            <person name="Yang G."/>
            <person name="Stott J.M."/>
            <person name="Schein J.E."/>
            <person name="Shin H."/>
            <person name="Smailus D."/>
            <person name="Siddiqui A.S."/>
            <person name="Marra M.A."/>
            <person name="Jones S.J.M."/>
            <person name="Holt R."/>
            <person name="Brinkman F.S.L."/>
            <person name="Miyauchi K."/>
            <person name="Fukuda M."/>
            <person name="Davies J.E."/>
            <person name="Mohn W.W."/>
            <person name="Eltis L.D."/>
        </authorList>
    </citation>
    <scope>NUCLEOTIDE SEQUENCE [LARGE SCALE GENOMIC DNA]</scope>
    <source>
        <strain>RHA1</strain>
    </source>
</reference>
<dbReference type="EC" id="2.2.1.9" evidence="1"/>
<dbReference type="EMBL" id="CP000431">
    <property type="protein sequence ID" value="ABG93804.1"/>
    <property type="molecule type" value="Genomic_DNA"/>
</dbReference>
<dbReference type="RefSeq" id="WP_009474677.1">
    <property type="nucleotide sequence ID" value="NC_008268.1"/>
</dbReference>
<dbReference type="SMR" id="Q0SF82"/>
<dbReference type="KEGG" id="rha:RHA1_ro01997"/>
<dbReference type="eggNOG" id="COG1165">
    <property type="taxonomic scope" value="Bacteria"/>
</dbReference>
<dbReference type="HOGENOM" id="CLU_006051_4_0_11"/>
<dbReference type="OrthoDB" id="9791859at2"/>
<dbReference type="UniPathway" id="UPA00079"/>
<dbReference type="UniPathway" id="UPA01057">
    <property type="reaction ID" value="UER00164"/>
</dbReference>
<dbReference type="Proteomes" id="UP000008710">
    <property type="component" value="Chromosome"/>
</dbReference>
<dbReference type="GO" id="GO:0070204">
    <property type="term" value="F:2-succinyl-5-enolpyruvyl-6-hydroxy-3-cyclohexene-1-carboxylic-acid synthase activity"/>
    <property type="evidence" value="ECO:0007669"/>
    <property type="project" value="UniProtKB-UniRule"/>
</dbReference>
<dbReference type="GO" id="GO:0000287">
    <property type="term" value="F:magnesium ion binding"/>
    <property type="evidence" value="ECO:0007669"/>
    <property type="project" value="UniProtKB-UniRule"/>
</dbReference>
<dbReference type="GO" id="GO:0030145">
    <property type="term" value="F:manganese ion binding"/>
    <property type="evidence" value="ECO:0007669"/>
    <property type="project" value="UniProtKB-UniRule"/>
</dbReference>
<dbReference type="GO" id="GO:0030976">
    <property type="term" value="F:thiamine pyrophosphate binding"/>
    <property type="evidence" value="ECO:0007669"/>
    <property type="project" value="UniProtKB-UniRule"/>
</dbReference>
<dbReference type="GO" id="GO:0009234">
    <property type="term" value="P:menaquinone biosynthetic process"/>
    <property type="evidence" value="ECO:0007669"/>
    <property type="project" value="UniProtKB-UniRule"/>
</dbReference>
<dbReference type="CDD" id="cd07037">
    <property type="entry name" value="TPP_PYR_MenD"/>
    <property type="match status" value="1"/>
</dbReference>
<dbReference type="CDD" id="cd02009">
    <property type="entry name" value="TPP_SHCHC_synthase"/>
    <property type="match status" value="1"/>
</dbReference>
<dbReference type="Gene3D" id="3.40.50.970">
    <property type="match status" value="2"/>
</dbReference>
<dbReference type="HAMAP" id="MF_01659">
    <property type="entry name" value="MenD"/>
    <property type="match status" value="1"/>
</dbReference>
<dbReference type="InterPro" id="IPR004433">
    <property type="entry name" value="MenaQ_synth_MenD"/>
</dbReference>
<dbReference type="InterPro" id="IPR029061">
    <property type="entry name" value="THDP-binding"/>
</dbReference>
<dbReference type="InterPro" id="IPR012001">
    <property type="entry name" value="Thiamin_PyroP_enz_TPP-bd_dom"/>
</dbReference>
<dbReference type="InterPro" id="IPR011766">
    <property type="entry name" value="TPP_enzyme_TPP-bd"/>
</dbReference>
<dbReference type="NCBIfam" id="TIGR00173">
    <property type="entry name" value="menD"/>
    <property type="match status" value="1"/>
</dbReference>
<dbReference type="PANTHER" id="PTHR42916">
    <property type="entry name" value="2-SUCCINYL-5-ENOLPYRUVYL-6-HYDROXY-3-CYCLOHEXENE-1-CARBOXYLATE SYNTHASE"/>
    <property type="match status" value="1"/>
</dbReference>
<dbReference type="PANTHER" id="PTHR42916:SF1">
    <property type="entry name" value="PROTEIN PHYLLO, CHLOROPLASTIC"/>
    <property type="match status" value="1"/>
</dbReference>
<dbReference type="Pfam" id="PF02775">
    <property type="entry name" value="TPP_enzyme_C"/>
    <property type="match status" value="1"/>
</dbReference>
<dbReference type="Pfam" id="PF02776">
    <property type="entry name" value="TPP_enzyme_N"/>
    <property type="match status" value="1"/>
</dbReference>
<dbReference type="PIRSF" id="PIRSF004983">
    <property type="entry name" value="MenD"/>
    <property type="match status" value="1"/>
</dbReference>
<dbReference type="SUPFAM" id="SSF52518">
    <property type="entry name" value="Thiamin diphosphate-binding fold (THDP-binding)"/>
    <property type="match status" value="2"/>
</dbReference>
<proteinExistence type="inferred from homology"/>
<name>MEND_RHOJR</name>
<feature type="chain" id="PRO_0000341814" description="2-succinyl-5-enolpyruvyl-6-hydroxy-3-cyclohexene-1-carboxylate synthase">
    <location>
        <begin position="1"/>
        <end position="541"/>
    </location>
</feature>
<protein>
    <recommendedName>
        <fullName evidence="1">2-succinyl-5-enolpyruvyl-6-hydroxy-3-cyclohexene-1-carboxylate synthase</fullName>
        <shortName evidence="1">SEPHCHC synthase</shortName>
        <ecNumber evidence="1">2.2.1.9</ecNumber>
    </recommendedName>
    <alternativeName>
        <fullName evidence="1">Menaquinone biosynthesis protein MenD</fullName>
    </alternativeName>
</protein>
<sequence>MNPSTAQATAVVDELVRGGVREVVLCPGSRNAPLAFALQAADLEGRLRLHMRIDERTAGFLALGLAVAGKRPVPIVMTSGTAVANLGPAVLEANYARVPLVVLSANRPYEMLGTGANQTIEQLGLFGSQVRATISLGLAEDDAGQNSQWRSAVCRVLAAARGTRSGNAGPVHFDIPLREPLVPDVHAQGPVPQGRPGGAAWTTTQHATLDVPMDLDLTPDTIVISGHGSALRPELAGLPTVAEPTAPLHGIPVHPMALPQLKPRQAVITGRPTLHRSVSKVLADPSVAVYALTTGPRWPDVSGNVLATGTRAVVSGEPDRAWINRCRTLSEHTDKAVRAQLAAHPKATGLHVAAAVMDALTDGDQLLLGASNPVRDAALVSYPAPKIRVLSNRGVAGIDGTVSAAVGAALAYEEGRTVALLGDLTFLHDASGLLIGSGEPRPRDLTIVVANDDGGGIFELLEQGDPQYAGVFERVFGTPHGMDLAALCAAYRVEHHLVGLGELSTRLSAPEAPGDRGIRVLEVTTERSGLRELHAAVRAQL</sequence>
<comment type="function">
    <text evidence="1">Catalyzes the thiamine diphosphate-dependent decarboxylation of 2-oxoglutarate and the subsequent addition of the resulting succinic semialdehyde-thiamine pyrophosphate anion to isochorismate to yield 2-succinyl-5-enolpyruvyl-6-hydroxy-3-cyclohexene-1-carboxylate (SEPHCHC).</text>
</comment>
<comment type="catalytic activity">
    <reaction evidence="1">
        <text>isochorismate + 2-oxoglutarate + H(+) = 5-enolpyruvoyl-6-hydroxy-2-succinyl-cyclohex-3-ene-1-carboxylate + CO2</text>
        <dbReference type="Rhea" id="RHEA:25593"/>
        <dbReference type="ChEBI" id="CHEBI:15378"/>
        <dbReference type="ChEBI" id="CHEBI:16526"/>
        <dbReference type="ChEBI" id="CHEBI:16810"/>
        <dbReference type="ChEBI" id="CHEBI:29780"/>
        <dbReference type="ChEBI" id="CHEBI:58818"/>
        <dbReference type="EC" id="2.2.1.9"/>
    </reaction>
</comment>
<comment type="cofactor">
    <cofactor evidence="1">
        <name>Mg(2+)</name>
        <dbReference type="ChEBI" id="CHEBI:18420"/>
    </cofactor>
    <cofactor evidence="1">
        <name>Mn(2+)</name>
        <dbReference type="ChEBI" id="CHEBI:29035"/>
    </cofactor>
</comment>
<comment type="cofactor">
    <cofactor evidence="1">
        <name>thiamine diphosphate</name>
        <dbReference type="ChEBI" id="CHEBI:58937"/>
    </cofactor>
    <text evidence="1">Binds 1 thiamine pyrophosphate per subunit.</text>
</comment>
<comment type="pathway">
    <text evidence="1">Quinol/quinone metabolism; 1,4-dihydroxy-2-naphthoate biosynthesis; 1,4-dihydroxy-2-naphthoate from chorismate: step 2/7.</text>
</comment>
<comment type="pathway">
    <text evidence="1">Quinol/quinone metabolism; menaquinone biosynthesis.</text>
</comment>
<comment type="subunit">
    <text evidence="1">Homodimer.</text>
</comment>
<comment type="similarity">
    <text evidence="1">Belongs to the TPP enzyme family. MenD subfamily.</text>
</comment>